<accession>Q2A5M9</accession>
<gene>
    <name type="ordered locus">FTL_0177</name>
</gene>
<name>YIDD_FRATH</name>
<reference key="1">
    <citation type="submission" date="2006-03" db="EMBL/GenBank/DDBJ databases">
        <title>Complete genome sequence of Francisella tularensis LVS (Live Vaccine Strain).</title>
        <authorList>
            <person name="Chain P."/>
            <person name="Larimer F."/>
            <person name="Land M."/>
            <person name="Stilwagen S."/>
            <person name="Larsson P."/>
            <person name="Bearden S."/>
            <person name="Chu M."/>
            <person name="Oyston P."/>
            <person name="Forsman M."/>
            <person name="Andersson S."/>
            <person name="Lindler L."/>
            <person name="Titball R."/>
            <person name="Garcia E."/>
        </authorList>
    </citation>
    <scope>NUCLEOTIDE SEQUENCE [LARGE SCALE GENOMIC DNA]</scope>
    <source>
        <strain>LVS</strain>
    </source>
</reference>
<dbReference type="EMBL" id="AM233362">
    <property type="protein sequence ID" value="CAJ78618.1"/>
    <property type="molecule type" value="Genomic_DNA"/>
</dbReference>
<dbReference type="KEGG" id="ftl:FTL_0177"/>
<dbReference type="Proteomes" id="UP000001944">
    <property type="component" value="Chromosome"/>
</dbReference>
<dbReference type="GO" id="GO:0005886">
    <property type="term" value="C:plasma membrane"/>
    <property type="evidence" value="ECO:0007669"/>
    <property type="project" value="UniProtKB-SubCell"/>
</dbReference>
<dbReference type="HAMAP" id="MF_00386">
    <property type="entry name" value="UPF0161_YidD"/>
    <property type="match status" value="1"/>
</dbReference>
<dbReference type="InterPro" id="IPR002696">
    <property type="entry name" value="Membr_insert_effic_factor_YidD"/>
</dbReference>
<dbReference type="NCBIfam" id="TIGR00278">
    <property type="entry name" value="membrane protein insertion efficiency factor YidD"/>
    <property type="match status" value="1"/>
</dbReference>
<dbReference type="PANTHER" id="PTHR33383">
    <property type="entry name" value="MEMBRANE PROTEIN INSERTION EFFICIENCY FACTOR-RELATED"/>
    <property type="match status" value="1"/>
</dbReference>
<dbReference type="PANTHER" id="PTHR33383:SF1">
    <property type="entry name" value="MEMBRANE PROTEIN INSERTION EFFICIENCY FACTOR-RELATED"/>
    <property type="match status" value="1"/>
</dbReference>
<dbReference type="Pfam" id="PF01809">
    <property type="entry name" value="YidD"/>
    <property type="match status" value="1"/>
</dbReference>
<dbReference type="SMART" id="SM01234">
    <property type="entry name" value="Haemolytic"/>
    <property type="match status" value="1"/>
</dbReference>
<feature type="chain" id="PRO_0000253107" description="Putative membrane protein insertion efficiency factor">
    <location>
        <begin position="1"/>
        <end position="82"/>
    </location>
</feature>
<protein>
    <recommendedName>
        <fullName evidence="1">Putative membrane protein insertion efficiency factor</fullName>
    </recommendedName>
</protein>
<organism>
    <name type="scientific">Francisella tularensis subsp. holarctica (strain LVS)</name>
    <dbReference type="NCBI Taxonomy" id="376619"/>
    <lineage>
        <taxon>Bacteria</taxon>
        <taxon>Pseudomonadati</taxon>
        <taxon>Pseudomonadota</taxon>
        <taxon>Gammaproteobacteria</taxon>
        <taxon>Thiotrichales</taxon>
        <taxon>Francisellaceae</taxon>
        <taxon>Francisella</taxon>
    </lineage>
</organism>
<proteinExistence type="inferred from homology"/>
<comment type="function">
    <text evidence="1">Could be involved in insertion of integral membrane proteins into the membrane.</text>
</comment>
<comment type="subcellular location">
    <subcellularLocation>
        <location evidence="1">Cell inner membrane</location>
        <topology evidence="1">Peripheral membrane protein</topology>
        <orientation evidence="1">Cytoplasmic side</orientation>
    </subcellularLocation>
</comment>
<comment type="similarity">
    <text evidence="1">Belongs to the UPF0161 family.</text>
</comment>
<evidence type="ECO:0000255" key="1">
    <source>
        <dbReference type="HAMAP-Rule" id="MF_00386"/>
    </source>
</evidence>
<keyword id="KW-0997">Cell inner membrane</keyword>
<keyword id="KW-1003">Cell membrane</keyword>
<keyword id="KW-0472">Membrane</keyword>
<keyword id="KW-1185">Reference proteome</keyword>
<sequence length="82" mass="9769">MFFKKITLIPFVMLINLYRYCISPFIPARCRYYPTCSEYALEALKTHGILKGLYLTTRRLLRCHPLSKRDYYDLVPCKNKKG</sequence>